<keyword id="KW-0456">Lyase</keyword>
<keyword id="KW-1185">Reference proteome</keyword>
<comment type="similarity">
    <text evidence="1">Belongs to the D-glutamate cyclase family.</text>
</comment>
<accession>A4VN63</accession>
<proteinExistence type="inferred from homology"/>
<protein>
    <recommendedName>
        <fullName evidence="1">Putative hydro-lyase PST_2764</fullName>
        <ecNumber evidence="1">4.2.1.-</ecNumber>
    </recommendedName>
</protein>
<name>Y2764_STUS1</name>
<organism>
    <name type="scientific">Stutzerimonas stutzeri (strain A1501)</name>
    <name type="common">Pseudomonas stutzeri</name>
    <dbReference type="NCBI Taxonomy" id="379731"/>
    <lineage>
        <taxon>Bacteria</taxon>
        <taxon>Pseudomonadati</taxon>
        <taxon>Pseudomonadota</taxon>
        <taxon>Gammaproteobacteria</taxon>
        <taxon>Pseudomonadales</taxon>
        <taxon>Pseudomonadaceae</taxon>
        <taxon>Stutzerimonas</taxon>
    </lineage>
</organism>
<sequence>MNLTAYRDLSPAALRERIRQGEFDGPTAGLANGYAQANLMIVRRELAYDFLLFCQRNPKPCPLLDVTDPGSFEPRHAAPGADIRTDFPRYRIYRNGELDQEVQDITPFWEDDMVAFLIGCSFSFEAALLANGVPVRHIEDGHNVPMYRTNIACQPAGGLSGPMVVSMRPMPANKVVRAVQVTSRFPSVHGAPVHVGDPRLLGIADLAKPDFGEPSELREGEVPVFWACGVTPQAVAMQARPELVITHAPGHMFITDLRDEQLGVI</sequence>
<evidence type="ECO:0000255" key="1">
    <source>
        <dbReference type="HAMAP-Rule" id="MF_01830"/>
    </source>
</evidence>
<feature type="chain" id="PRO_0000379855" description="Putative hydro-lyase PST_2764">
    <location>
        <begin position="1"/>
        <end position="265"/>
    </location>
</feature>
<dbReference type="EC" id="4.2.1.-" evidence="1"/>
<dbReference type="EMBL" id="CP000304">
    <property type="protein sequence ID" value="ABP80414.1"/>
    <property type="molecule type" value="Genomic_DNA"/>
</dbReference>
<dbReference type="RefSeq" id="WP_011913871.1">
    <property type="nucleotide sequence ID" value="NC_009434.1"/>
</dbReference>
<dbReference type="SMR" id="A4VN63"/>
<dbReference type="KEGG" id="psa:PST_2764"/>
<dbReference type="eggNOG" id="COG4336">
    <property type="taxonomic scope" value="Bacteria"/>
</dbReference>
<dbReference type="HOGENOM" id="CLU_059759_0_0_6"/>
<dbReference type="Proteomes" id="UP000000233">
    <property type="component" value="Chromosome"/>
</dbReference>
<dbReference type="GO" id="GO:0016829">
    <property type="term" value="F:lyase activity"/>
    <property type="evidence" value="ECO:0007669"/>
    <property type="project" value="UniProtKB-KW"/>
</dbReference>
<dbReference type="FunFam" id="3.30.2040.10:FF:000001">
    <property type="entry name" value="D-glutamate cyclase, mitochondrial"/>
    <property type="match status" value="1"/>
</dbReference>
<dbReference type="Gene3D" id="3.40.1640.10">
    <property type="entry name" value="PSTPO5379-like"/>
    <property type="match status" value="1"/>
</dbReference>
<dbReference type="Gene3D" id="3.30.2040.10">
    <property type="entry name" value="PSTPO5379-like domain"/>
    <property type="match status" value="1"/>
</dbReference>
<dbReference type="HAMAP" id="MF_01830">
    <property type="entry name" value="Hydro_lyase"/>
    <property type="match status" value="1"/>
</dbReference>
<dbReference type="InterPro" id="IPR009906">
    <property type="entry name" value="D-Glu_cyclase"/>
</dbReference>
<dbReference type="InterPro" id="IPR038021">
    <property type="entry name" value="Putative_hydro-lyase"/>
</dbReference>
<dbReference type="InterPro" id="IPR016938">
    <property type="entry name" value="UPF0317"/>
</dbReference>
<dbReference type="NCBIfam" id="NF003969">
    <property type="entry name" value="PRK05463.1"/>
    <property type="match status" value="1"/>
</dbReference>
<dbReference type="PANTHER" id="PTHR32022">
    <property type="entry name" value="D-GLUTAMATE CYCLASE, MITOCHONDRIAL"/>
    <property type="match status" value="1"/>
</dbReference>
<dbReference type="PANTHER" id="PTHR32022:SF10">
    <property type="entry name" value="D-GLUTAMATE CYCLASE, MITOCHONDRIAL"/>
    <property type="match status" value="1"/>
</dbReference>
<dbReference type="Pfam" id="PF07286">
    <property type="entry name" value="D-Glu_cyclase"/>
    <property type="match status" value="1"/>
</dbReference>
<dbReference type="PIRSF" id="PIRSF029755">
    <property type="entry name" value="UCP029755"/>
    <property type="match status" value="1"/>
</dbReference>
<dbReference type="SUPFAM" id="SSF160920">
    <property type="entry name" value="PSTPO5379-like"/>
    <property type="match status" value="1"/>
</dbReference>
<gene>
    <name type="ordered locus">PST_2764</name>
</gene>
<reference key="1">
    <citation type="journal article" date="2008" name="Proc. Natl. Acad. Sci. U.S.A.">
        <title>Nitrogen fixation island and rhizosphere competence traits in the genome of root-associated Pseudomonas stutzeri A1501.</title>
        <authorList>
            <person name="Yan Y."/>
            <person name="Yang J."/>
            <person name="Dou Y."/>
            <person name="Chen M."/>
            <person name="Ping S."/>
            <person name="Peng J."/>
            <person name="Lu W."/>
            <person name="Zhang W."/>
            <person name="Yao Z."/>
            <person name="Li H."/>
            <person name="Liu W."/>
            <person name="He S."/>
            <person name="Geng L."/>
            <person name="Zhang X."/>
            <person name="Yang F."/>
            <person name="Yu H."/>
            <person name="Zhan Y."/>
            <person name="Li D."/>
            <person name="Lin Z."/>
            <person name="Wang Y."/>
            <person name="Elmerich C."/>
            <person name="Lin M."/>
            <person name="Jin Q."/>
        </authorList>
    </citation>
    <scope>NUCLEOTIDE SEQUENCE [LARGE SCALE GENOMIC DNA]</scope>
    <source>
        <strain>A1501</strain>
    </source>
</reference>